<proteinExistence type="inferred from homology"/>
<comment type="function">
    <text evidence="1">Catalyzes the ATP-dependent 2-thiolation of cytidine in position 32 of tRNA, to form 2-thiocytidine (s(2)C32). The sulfur atoms are provided by the cysteine/cysteine desulfurase (IscS) system.</text>
</comment>
<comment type="catalytic activity">
    <reaction evidence="1">
        <text>cytidine(32) in tRNA + S-sulfanyl-L-cysteinyl-[cysteine desulfurase] + AH2 + ATP = 2-thiocytidine(32) in tRNA + L-cysteinyl-[cysteine desulfurase] + A + AMP + diphosphate + H(+)</text>
        <dbReference type="Rhea" id="RHEA:57048"/>
        <dbReference type="Rhea" id="RHEA-COMP:10288"/>
        <dbReference type="Rhea" id="RHEA-COMP:12157"/>
        <dbReference type="Rhea" id="RHEA-COMP:12158"/>
        <dbReference type="Rhea" id="RHEA-COMP:14821"/>
        <dbReference type="ChEBI" id="CHEBI:13193"/>
        <dbReference type="ChEBI" id="CHEBI:15378"/>
        <dbReference type="ChEBI" id="CHEBI:17499"/>
        <dbReference type="ChEBI" id="CHEBI:29950"/>
        <dbReference type="ChEBI" id="CHEBI:30616"/>
        <dbReference type="ChEBI" id="CHEBI:33019"/>
        <dbReference type="ChEBI" id="CHEBI:61963"/>
        <dbReference type="ChEBI" id="CHEBI:82748"/>
        <dbReference type="ChEBI" id="CHEBI:141453"/>
        <dbReference type="ChEBI" id="CHEBI:456215"/>
    </reaction>
    <physiologicalReaction direction="left-to-right" evidence="1">
        <dbReference type="Rhea" id="RHEA:57049"/>
    </physiologicalReaction>
</comment>
<comment type="cofactor">
    <cofactor evidence="1">
        <name>Mg(2+)</name>
        <dbReference type="ChEBI" id="CHEBI:18420"/>
    </cofactor>
</comment>
<comment type="cofactor">
    <cofactor evidence="1">
        <name>[4Fe-4S] cluster</name>
        <dbReference type="ChEBI" id="CHEBI:49883"/>
    </cofactor>
    <text evidence="1">Binds 1 [4Fe-4S] cluster per subunit. The cluster is chelated by three Cys residues, the fourth Fe has a free coordination site that may bind a sulfur atom transferred from the persulfide of IscS.</text>
</comment>
<comment type="pathway">
    <text evidence="1">tRNA modification.</text>
</comment>
<comment type="subunit">
    <text evidence="1">Homodimer.</text>
</comment>
<comment type="subcellular location">
    <subcellularLocation>
        <location evidence="1">Cytoplasm</location>
    </subcellularLocation>
</comment>
<comment type="miscellaneous">
    <text evidence="1">The thiolation reaction likely consists of two steps: a first activation step by ATP to form an adenylated intermediate of the target base of tRNA, and a second nucleophilic substitution step of the sulfur (S) atom supplied by the hydrosulfide attached to the Fe-S cluster.</text>
</comment>
<comment type="similarity">
    <text evidence="1">Belongs to the TtcA family.</text>
</comment>
<name>TTCA_DEIGD</name>
<reference key="1">
    <citation type="submission" date="2006-04" db="EMBL/GenBank/DDBJ databases">
        <title>Complete sequence of chromosome of Deinococcus geothermalis DSM 11300.</title>
        <authorList>
            <person name="Copeland A."/>
            <person name="Lucas S."/>
            <person name="Lapidus A."/>
            <person name="Barry K."/>
            <person name="Detter J.C."/>
            <person name="Glavina del Rio T."/>
            <person name="Hammon N."/>
            <person name="Israni S."/>
            <person name="Dalin E."/>
            <person name="Tice H."/>
            <person name="Pitluck S."/>
            <person name="Brettin T."/>
            <person name="Bruce D."/>
            <person name="Han C."/>
            <person name="Tapia R."/>
            <person name="Saunders E."/>
            <person name="Gilna P."/>
            <person name="Schmutz J."/>
            <person name="Larimer F."/>
            <person name="Land M."/>
            <person name="Hauser L."/>
            <person name="Kyrpides N."/>
            <person name="Kim E."/>
            <person name="Daly M.J."/>
            <person name="Fredrickson J.K."/>
            <person name="Makarova K.S."/>
            <person name="Gaidamakova E.K."/>
            <person name="Zhai M."/>
            <person name="Richardson P."/>
        </authorList>
    </citation>
    <scope>NUCLEOTIDE SEQUENCE [LARGE SCALE GENOMIC DNA]</scope>
    <source>
        <strain>DSM 11300 / CIP 105573 / AG-3a</strain>
    </source>
</reference>
<protein>
    <recommendedName>
        <fullName evidence="1">tRNA-cytidine(32) 2-sulfurtransferase</fullName>
        <ecNumber evidence="1">2.8.1.-</ecNumber>
    </recommendedName>
    <alternativeName>
        <fullName evidence="1">Two-thiocytidine biosynthesis protein A</fullName>
    </alternativeName>
    <alternativeName>
        <fullName evidence="1">tRNA 2-thiocytidine biosynthesis protein TtcA</fullName>
    </alternativeName>
</protein>
<sequence length="289" mass="32410">MTQIADPSILFPPLVKGAAQAITDYRMIEEGDRVMVCLSGGKDSYTLLDILLHLQKRAPIHFEVVAVNLDQGQPGFPKHVLPEYLTRLGVPFDILTEDTYSIVKEKTPEGKTTCALCSRLRRGILYRHAREIGATKIALGHHRDDILETLFMNMFFGARLKAMPPKLQSDDGTNVVIRPLAYLAERDIERYAQAKGFPIIPCNLCGSQPNLQRRVVGEMLEGWEREHPGRLQNILRSLTRVTPSHLLDRDLYDFAGLSVTPAEGDRGFDGEEYPEREFLAGLSNLTLLG</sequence>
<gene>
    <name evidence="1" type="primary">ttcA</name>
    <name type="ordered locus">Dgeo_1896</name>
</gene>
<feature type="chain" id="PRO_0000348709" description="tRNA-cytidine(32) 2-sulfurtransferase">
    <location>
        <begin position="1"/>
        <end position="289"/>
    </location>
</feature>
<feature type="short sequence motif" description="PP-loop motif" evidence="1">
    <location>
        <begin position="39"/>
        <end position="44"/>
    </location>
</feature>
<feature type="binding site" evidence="1">
    <location>
        <position position="114"/>
    </location>
    <ligand>
        <name>[4Fe-4S] cluster</name>
        <dbReference type="ChEBI" id="CHEBI:49883"/>
    </ligand>
</feature>
<feature type="binding site" evidence="1">
    <location>
        <position position="117"/>
    </location>
    <ligand>
        <name>[4Fe-4S] cluster</name>
        <dbReference type="ChEBI" id="CHEBI:49883"/>
    </ligand>
</feature>
<feature type="binding site" evidence="1">
    <location>
        <position position="205"/>
    </location>
    <ligand>
        <name>[4Fe-4S] cluster</name>
        <dbReference type="ChEBI" id="CHEBI:49883"/>
    </ligand>
</feature>
<keyword id="KW-0004">4Fe-4S</keyword>
<keyword id="KW-0067">ATP-binding</keyword>
<keyword id="KW-0963">Cytoplasm</keyword>
<keyword id="KW-0408">Iron</keyword>
<keyword id="KW-0411">Iron-sulfur</keyword>
<keyword id="KW-0460">Magnesium</keyword>
<keyword id="KW-0479">Metal-binding</keyword>
<keyword id="KW-0547">Nucleotide-binding</keyword>
<keyword id="KW-0694">RNA-binding</keyword>
<keyword id="KW-0808">Transferase</keyword>
<keyword id="KW-0819">tRNA processing</keyword>
<keyword id="KW-0820">tRNA-binding</keyword>
<evidence type="ECO:0000255" key="1">
    <source>
        <dbReference type="HAMAP-Rule" id="MF_01850"/>
    </source>
</evidence>
<dbReference type="EC" id="2.8.1.-" evidence="1"/>
<dbReference type="EMBL" id="CP000359">
    <property type="protein sequence ID" value="ABF46191.1"/>
    <property type="molecule type" value="Genomic_DNA"/>
</dbReference>
<dbReference type="RefSeq" id="WP_011531018.1">
    <property type="nucleotide sequence ID" value="NC_008025.1"/>
</dbReference>
<dbReference type="SMR" id="Q1IX43"/>
<dbReference type="STRING" id="319795.Dgeo_1896"/>
<dbReference type="KEGG" id="dge:Dgeo_1896"/>
<dbReference type="eggNOG" id="COG0037">
    <property type="taxonomic scope" value="Bacteria"/>
</dbReference>
<dbReference type="HOGENOM" id="CLU_026481_0_0_0"/>
<dbReference type="Proteomes" id="UP000002431">
    <property type="component" value="Chromosome"/>
</dbReference>
<dbReference type="GO" id="GO:0005737">
    <property type="term" value="C:cytoplasm"/>
    <property type="evidence" value="ECO:0007669"/>
    <property type="project" value="UniProtKB-SubCell"/>
</dbReference>
<dbReference type="GO" id="GO:0051539">
    <property type="term" value="F:4 iron, 4 sulfur cluster binding"/>
    <property type="evidence" value="ECO:0007669"/>
    <property type="project" value="UniProtKB-UniRule"/>
</dbReference>
<dbReference type="GO" id="GO:0005524">
    <property type="term" value="F:ATP binding"/>
    <property type="evidence" value="ECO:0007669"/>
    <property type="project" value="UniProtKB-UniRule"/>
</dbReference>
<dbReference type="GO" id="GO:0000287">
    <property type="term" value="F:magnesium ion binding"/>
    <property type="evidence" value="ECO:0007669"/>
    <property type="project" value="UniProtKB-UniRule"/>
</dbReference>
<dbReference type="GO" id="GO:0016783">
    <property type="term" value="F:sulfurtransferase activity"/>
    <property type="evidence" value="ECO:0007669"/>
    <property type="project" value="UniProtKB-UniRule"/>
</dbReference>
<dbReference type="GO" id="GO:0000049">
    <property type="term" value="F:tRNA binding"/>
    <property type="evidence" value="ECO:0007669"/>
    <property type="project" value="UniProtKB-KW"/>
</dbReference>
<dbReference type="GO" id="GO:0034227">
    <property type="term" value="P:tRNA thio-modification"/>
    <property type="evidence" value="ECO:0007669"/>
    <property type="project" value="UniProtKB-UniRule"/>
</dbReference>
<dbReference type="CDD" id="cd24138">
    <property type="entry name" value="TtcA-like"/>
    <property type="match status" value="1"/>
</dbReference>
<dbReference type="Gene3D" id="3.40.50.620">
    <property type="entry name" value="HUPs"/>
    <property type="match status" value="1"/>
</dbReference>
<dbReference type="HAMAP" id="MF_01850">
    <property type="entry name" value="TtcA"/>
    <property type="match status" value="1"/>
</dbReference>
<dbReference type="InterPro" id="IPR014729">
    <property type="entry name" value="Rossmann-like_a/b/a_fold"/>
</dbReference>
<dbReference type="InterPro" id="IPR011063">
    <property type="entry name" value="TilS/TtcA_N"/>
</dbReference>
<dbReference type="InterPro" id="IPR012089">
    <property type="entry name" value="tRNA_Cyd_32_2_STrfase"/>
</dbReference>
<dbReference type="NCBIfam" id="NF007972">
    <property type="entry name" value="PRK10696.1"/>
    <property type="match status" value="1"/>
</dbReference>
<dbReference type="PANTHER" id="PTHR43686:SF1">
    <property type="entry name" value="AMINOTRAN_5 DOMAIN-CONTAINING PROTEIN"/>
    <property type="match status" value="1"/>
</dbReference>
<dbReference type="PANTHER" id="PTHR43686">
    <property type="entry name" value="SULFURTRANSFERASE-RELATED"/>
    <property type="match status" value="1"/>
</dbReference>
<dbReference type="Pfam" id="PF01171">
    <property type="entry name" value="ATP_bind_3"/>
    <property type="match status" value="1"/>
</dbReference>
<dbReference type="SUPFAM" id="SSF52402">
    <property type="entry name" value="Adenine nucleotide alpha hydrolases-like"/>
    <property type="match status" value="1"/>
</dbReference>
<organism>
    <name type="scientific">Deinococcus geothermalis (strain DSM 11300 / CIP 105573 / AG-3a)</name>
    <dbReference type="NCBI Taxonomy" id="319795"/>
    <lineage>
        <taxon>Bacteria</taxon>
        <taxon>Thermotogati</taxon>
        <taxon>Deinococcota</taxon>
        <taxon>Deinococci</taxon>
        <taxon>Deinococcales</taxon>
        <taxon>Deinococcaceae</taxon>
        <taxon>Deinococcus</taxon>
    </lineage>
</organism>
<accession>Q1IX43</accession>